<organism>
    <name type="scientific">Geotalea uraniireducens (strain Rf4)</name>
    <name type="common">Geobacter uraniireducens</name>
    <dbReference type="NCBI Taxonomy" id="351605"/>
    <lineage>
        <taxon>Bacteria</taxon>
        <taxon>Pseudomonadati</taxon>
        <taxon>Thermodesulfobacteriota</taxon>
        <taxon>Desulfuromonadia</taxon>
        <taxon>Geobacterales</taxon>
        <taxon>Geobacteraceae</taxon>
        <taxon>Geotalea</taxon>
    </lineage>
</organism>
<reference key="1">
    <citation type="submission" date="2007-05" db="EMBL/GenBank/DDBJ databases">
        <title>Complete sequence of Geobacter uraniireducens Rf4.</title>
        <authorList>
            <consortium name="US DOE Joint Genome Institute"/>
            <person name="Copeland A."/>
            <person name="Lucas S."/>
            <person name="Lapidus A."/>
            <person name="Barry K."/>
            <person name="Detter J.C."/>
            <person name="Glavina del Rio T."/>
            <person name="Hammon N."/>
            <person name="Israni S."/>
            <person name="Dalin E."/>
            <person name="Tice H."/>
            <person name="Pitluck S."/>
            <person name="Chertkov O."/>
            <person name="Brettin T."/>
            <person name="Bruce D."/>
            <person name="Han C."/>
            <person name="Schmutz J."/>
            <person name="Larimer F."/>
            <person name="Land M."/>
            <person name="Hauser L."/>
            <person name="Kyrpides N."/>
            <person name="Mikhailova N."/>
            <person name="Shelobolina E."/>
            <person name="Aklujkar M."/>
            <person name="Lovley D."/>
            <person name="Richardson P."/>
        </authorList>
    </citation>
    <scope>NUCLEOTIDE SEQUENCE [LARGE SCALE GENOMIC DNA]</scope>
    <source>
        <strain>ATCC BAA-1134 / JCM 13001 / Rf4</strain>
    </source>
</reference>
<gene>
    <name evidence="1" type="primary">rlmN</name>
    <name type="ordered locus">Gura_1581</name>
</gene>
<comment type="function">
    <text evidence="1">Specifically methylates position 2 of adenine 2503 in 23S rRNA and position 2 of adenine 37 in tRNAs. m2A2503 modification seems to play a crucial role in the proofreading step occurring at the peptidyl transferase center and thus would serve to optimize ribosomal fidelity.</text>
</comment>
<comment type="catalytic activity">
    <reaction evidence="1">
        <text>adenosine(2503) in 23S rRNA + 2 reduced [2Fe-2S]-[ferredoxin] + 2 S-adenosyl-L-methionine = 2-methyladenosine(2503) in 23S rRNA + 5'-deoxyadenosine + L-methionine + 2 oxidized [2Fe-2S]-[ferredoxin] + S-adenosyl-L-homocysteine</text>
        <dbReference type="Rhea" id="RHEA:42916"/>
        <dbReference type="Rhea" id="RHEA-COMP:10000"/>
        <dbReference type="Rhea" id="RHEA-COMP:10001"/>
        <dbReference type="Rhea" id="RHEA-COMP:10152"/>
        <dbReference type="Rhea" id="RHEA-COMP:10282"/>
        <dbReference type="ChEBI" id="CHEBI:17319"/>
        <dbReference type="ChEBI" id="CHEBI:33737"/>
        <dbReference type="ChEBI" id="CHEBI:33738"/>
        <dbReference type="ChEBI" id="CHEBI:57844"/>
        <dbReference type="ChEBI" id="CHEBI:57856"/>
        <dbReference type="ChEBI" id="CHEBI:59789"/>
        <dbReference type="ChEBI" id="CHEBI:74411"/>
        <dbReference type="ChEBI" id="CHEBI:74497"/>
        <dbReference type="EC" id="2.1.1.192"/>
    </reaction>
</comment>
<comment type="catalytic activity">
    <reaction evidence="1">
        <text>adenosine(37) in tRNA + 2 reduced [2Fe-2S]-[ferredoxin] + 2 S-adenosyl-L-methionine = 2-methyladenosine(37) in tRNA + 5'-deoxyadenosine + L-methionine + 2 oxidized [2Fe-2S]-[ferredoxin] + S-adenosyl-L-homocysteine</text>
        <dbReference type="Rhea" id="RHEA:43332"/>
        <dbReference type="Rhea" id="RHEA-COMP:10000"/>
        <dbReference type="Rhea" id="RHEA-COMP:10001"/>
        <dbReference type="Rhea" id="RHEA-COMP:10162"/>
        <dbReference type="Rhea" id="RHEA-COMP:10485"/>
        <dbReference type="ChEBI" id="CHEBI:17319"/>
        <dbReference type="ChEBI" id="CHEBI:33737"/>
        <dbReference type="ChEBI" id="CHEBI:33738"/>
        <dbReference type="ChEBI" id="CHEBI:57844"/>
        <dbReference type="ChEBI" id="CHEBI:57856"/>
        <dbReference type="ChEBI" id="CHEBI:59789"/>
        <dbReference type="ChEBI" id="CHEBI:74411"/>
        <dbReference type="ChEBI" id="CHEBI:74497"/>
        <dbReference type="EC" id="2.1.1.192"/>
    </reaction>
</comment>
<comment type="cofactor">
    <cofactor evidence="1">
        <name>[4Fe-4S] cluster</name>
        <dbReference type="ChEBI" id="CHEBI:49883"/>
    </cofactor>
    <text evidence="1">Binds 1 [4Fe-4S] cluster. The cluster is coordinated with 3 cysteines and an exchangeable S-adenosyl-L-methionine.</text>
</comment>
<comment type="subcellular location">
    <subcellularLocation>
        <location evidence="1">Cytoplasm</location>
    </subcellularLocation>
</comment>
<comment type="miscellaneous">
    <text evidence="1">Reaction proceeds by a ping-pong mechanism involving intermediate methylation of a conserved cysteine residue.</text>
</comment>
<comment type="similarity">
    <text evidence="1">Belongs to the radical SAM superfamily. RlmN family.</text>
</comment>
<feature type="chain" id="PRO_0000350196" description="Dual-specificity RNA methyltransferase RlmN">
    <location>
        <begin position="1"/>
        <end position="343"/>
    </location>
</feature>
<feature type="domain" description="Radical SAM core" evidence="2">
    <location>
        <begin position="98"/>
        <end position="325"/>
    </location>
</feature>
<feature type="active site" description="Proton acceptor" evidence="1">
    <location>
        <position position="92"/>
    </location>
</feature>
<feature type="active site" description="S-methylcysteine intermediate" evidence="1">
    <location>
        <position position="330"/>
    </location>
</feature>
<feature type="binding site" evidence="1">
    <location>
        <position position="112"/>
    </location>
    <ligand>
        <name>[4Fe-4S] cluster</name>
        <dbReference type="ChEBI" id="CHEBI:49883"/>
        <note>4Fe-4S-S-AdoMet</note>
    </ligand>
</feature>
<feature type="binding site" evidence="1">
    <location>
        <position position="116"/>
    </location>
    <ligand>
        <name>[4Fe-4S] cluster</name>
        <dbReference type="ChEBI" id="CHEBI:49883"/>
        <note>4Fe-4S-S-AdoMet</note>
    </ligand>
</feature>
<feature type="binding site" evidence="1">
    <location>
        <position position="119"/>
    </location>
    <ligand>
        <name>[4Fe-4S] cluster</name>
        <dbReference type="ChEBI" id="CHEBI:49883"/>
        <note>4Fe-4S-S-AdoMet</note>
    </ligand>
</feature>
<feature type="binding site" evidence="1">
    <location>
        <begin position="157"/>
        <end position="158"/>
    </location>
    <ligand>
        <name>S-adenosyl-L-methionine</name>
        <dbReference type="ChEBI" id="CHEBI:59789"/>
    </ligand>
</feature>
<feature type="binding site" evidence="1">
    <location>
        <position position="189"/>
    </location>
    <ligand>
        <name>S-adenosyl-L-methionine</name>
        <dbReference type="ChEBI" id="CHEBI:59789"/>
    </ligand>
</feature>
<feature type="binding site" evidence="1">
    <location>
        <begin position="211"/>
        <end position="213"/>
    </location>
    <ligand>
        <name>S-adenosyl-L-methionine</name>
        <dbReference type="ChEBI" id="CHEBI:59789"/>
    </ligand>
</feature>
<feature type="binding site" evidence="1">
    <location>
        <position position="287"/>
    </location>
    <ligand>
        <name>S-adenosyl-L-methionine</name>
        <dbReference type="ChEBI" id="CHEBI:59789"/>
    </ligand>
</feature>
<feature type="disulfide bond" description="(transient)" evidence="1">
    <location>
        <begin position="105"/>
        <end position="330"/>
    </location>
</feature>
<dbReference type="EC" id="2.1.1.192" evidence="1"/>
<dbReference type="EMBL" id="CP000698">
    <property type="protein sequence ID" value="ABQ25777.1"/>
    <property type="molecule type" value="Genomic_DNA"/>
</dbReference>
<dbReference type="RefSeq" id="WP_011938488.1">
    <property type="nucleotide sequence ID" value="NC_009483.1"/>
</dbReference>
<dbReference type="SMR" id="A5GEC2"/>
<dbReference type="STRING" id="351605.Gura_1581"/>
<dbReference type="KEGG" id="gur:Gura_1581"/>
<dbReference type="HOGENOM" id="CLU_029101_0_0_7"/>
<dbReference type="OrthoDB" id="9793973at2"/>
<dbReference type="Proteomes" id="UP000006695">
    <property type="component" value="Chromosome"/>
</dbReference>
<dbReference type="GO" id="GO:0005737">
    <property type="term" value="C:cytoplasm"/>
    <property type="evidence" value="ECO:0007669"/>
    <property type="project" value="UniProtKB-SubCell"/>
</dbReference>
<dbReference type="GO" id="GO:0051539">
    <property type="term" value="F:4 iron, 4 sulfur cluster binding"/>
    <property type="evidence" value="ECO:0007669"/>
    <property type="project" value="UniProtKB-UniRule"/>
</dbReference>
<dbReference type="GO" id="GO:0046872">
    <property type="term" value="F:metal ion binding"/>
    <property type="evidence" value="ECO:0007669"/>
    <property type="project" value="UniProtKB-KW"/>
</dbReference>
<dbReference type="GO" id="GO:0070040">
    <property type="term" value="F:rRNA (adenine(2503)-C2-)-methyltransferase activity"/>
    <property type="evidence" value="ECO:0007669"/>
    <property type="project" value="UniProtKB-UniRule"/>
</dbReference>
<dbReference type="GO" id="GO:0019843">
    <property type="term" value="F:rRNA binding"/>
    <property type="evidence" value="ECO:0007669"/>
    <property type="project" value="UniProtKB-UniRule"/>
</dbReference>
<dbReference type="GO" id="GO:0002935">
    <property type="term" value="F:tRNA (adenine(37)-C2)-methyltransferase activity"/>
    <property type="evidence" value="ECO:0007669"/>
    <property type="project" value="UniProtKB-UniRule"/>
</dbReference>
<dbReference type="GO" id="GO:0000049">
    <property type="term" value="F:tRNA binding"/>
    <property type="evidence" value="ECO:0007669"/>
    <property type="project" value="UniProtKB-UniRule"/>
</dbReference>
<dbReference type="GO" id="GO:0070475">
    <property type="term" value="P:rRNA base methylation"/>
    <property type="evidence" value="ECO:0007669"/>
    <property type="project" value="UniProtKB-UniRule"/>
</dbReference>
<dbReference type="GO" id="GO:0030488">
    <property type="term" value="P:tRNA methylation"/>
    <property type="evidence" value="ECO:0007669"/>
    <property type="project" value="UniProtKB-UniRule"/>
</dbReference>
<dbReference type="CDD" id="cd01335">
    <property type="entry name" value="Radical_SAM"/>
    <property type="match status" value="1"/>
</dbReference>
<dbReference type="FunFam" id="3.20.20.70:FF:000014">
    <property type="entry name" value="Probable dual-specificity RNA methyltransferase RlmN"/>
    <property type="match status" value="1"/>
</dbReference>
<dbReference type="Gene3D" id="1.10.150.530">
    <property type="match status" value="1"/>
</dbReference>
<dbReference type="Gene3D" id="3.20.20.70">
    <property type="entry name" value="Aldolase class I"/>
    <property type="match status" value="1"/>
</dbReference>
<dbReference type="HAMAP" id="MF_01849">
    <property type="entry name" value="RNA_methyltr_RlmN"/>
    <property type="match status" value="1"/>
</dbReference>
<dbReference type="InterPro" id="IPR013785">
    <property type="entry name" value="Aldolase_TIM"/>
</dbReference>
<dbReference type="InterPro" id="IPR040072">
    <property type="entry name" value="Methyltransferase_A"/>
</dbReference>
<dbReference type="InterPro" id="IPR048641">
    <property type="entry name" value="RlmN_N"/>
</dbReference>
<dbReference type="InterPro" id="IPR027492">
    <property type="entry name" value="RNA_MTrfase_RlmN"/>
</dbReference>
<dbReference type="InterPro" id="IPR004383">
    <property type="entry name" value="rRNA_lsu_MTrfase_RlmN/Cfr"/>
</dbReference>
<dbReference type="InterPro" id="IPR007197">
    <property type="entry name" value="rSAM"/>
</dbReference>
<dbReference type="NCBIfam" id="TIGR00048">
    <property type="entry name" value="rRNA_mod_RlmN"/>
    <property type="match status" value="1"/>
</dbReference>
<dbReference type="PANTHER" id="PTHR30544">
    <property type="entry name" value="23S RRNA METHYLTRANSFERASE"/>
    <property type="match status" value="1"/>
</dbReference>
<dbReference type="PANTHER" id="PTHR30544:SF5">
    <property type="entry name" value="RADICAL SAM CORE DOMAIN-CONTAINING PROTEIN"/>
    <property type="match status" value="1"/>
</dbReference>
<dbReference type="Pfam" id="PF04055">
    <property type="entry name" value="Radical_SAM"/>
    <property type="match status" value="1"/>
</dbReference>
<dbReference type="Pfam" id="PF21016">
    <property type="entry name" value="RlmN_N"/>
    <property type="match status" value="1"/>
</dbReference>
<dbReference type="PIRSF" id="PIRSF006004">
    <property type="entry name" value="CHP00048"/>
    <property type="match status" value="1"/>
</dbReference>
<dbReference type="SFLD" id="SFLDF00275">
    <property type="entry name" value="adenosine_C2_methyltransferase"/>
    <property type="match status" value="1"/>
</dbReference>
<dbReference type="SFLD" id="SFLDS00029">
    <property type="entry name" value="Radical_SAM"/>
    <property type="match status" value="1"/>
</dbReference>
<dbReference type="SUPFAM" id="SSF102114">
    <property type="entry name" value="Radical SAM enzymes"/>
    <property type="match status" value="1"/>
</dbReference>
<dbReference type="PROSITE" id="PS51918">
    <property type="entry name" value="RADICAL_SAM"/>
    <property type="match status" value="1"/>
</dbReference>
<accession>A5GEC2</accession>
<evidence type="ECO:0000255" key="1">
    <source>
        <dbReference type="HAMAP-Rule" id="MF_01849"/>
    </source>
</evidence>
<evidence type="ECO:0000255" key="2">
    <source>
        <dbReference type="PROSITE-ProRule" id="PRU01266"/>
    </source>
</evidence>
<proteinExistence type="inferred from homology"/>
<keyword id="KW-0004">4Fe-4S</keyword>
<keyword id="KW-0963">Cytoplasm</keyword>
<keyword id="KW-1015">Disulfide bond</keyword>
<keyword id="KW-0408">Iron</keyword>
<keyword id="KW-0411">Iron-sulfur</keyword>
<keyword id="KW-0479">Metal-binding</keyword>
<keyword id="KW-0489">Methyltransferase</keyword>
<keyword id="KW-1185">Reference proteome</keyword>
<keyword id="KW-0698">rRNA processing</keyword>
<keyword id="KW-0949">S-adenosyl-L-methionine</keyword>
<keyword id="KW-0808">Transferase</keyword>
<keyword id="KW-0819">tRNA processing</keyword>
<name>RLMN_GEOUR</name>
<sequence>MEKVDIKNFTLQELEAYIAGQGKERFRAKQIFKWLYQQDAREFADMTNLSKDFRQELEKTAWISNLDAEAVEASADGTKKYLFRLADGNAVESVLIPDEDRTTLCISSQVGCAMGCEFCLTGTFKLTRNLTTAEIVNQVCAVKRQEPVRNIVFMGMGEPLANLKNVVGALKILTDPDGFQFSTRKVTVSTSGLVPEMAELGASVTVNLAVSLNATTDEVRDRIMPINRRYPLKELLAACKAFPLPSRRWITIEYVMIRGVNDSLDDAKRLVRLISNIPSKVNLIPFNEHDGCTFQAPTQDSIDKFHKFLLDKHVTVITRSSRGSDISAACGQLKGRLDKAVKD</sequence>
<protein>
    <recommendedName>
        <fullName evidence="1">Dual-specificity RNA methyltransferase RlmN</fullName>
        <ecNumber evidence="1">2.1.1.192</ecNumber>
    </recommendedName>
    <alternativeName>
        <fullName evidence="1">23S rRNA (adenine(2503)-C(2))-methyltransferase</fullName>
    </alternativeName>
    <alternativeName>
        <fullName evidence="1">23S rRNA m2A2503 methyltransferase</fullName>
    </alternativeName>
    <alternativeName>
        <fullName evidence="1">Ribosomal RNA large subunit methyltransferase N</fullName>
    </alternativeName>
    <alternativeName>
        <fullName evidence="1">tRNA (adenine(37)-C(2))-methyltransferase</fullName>
    </alternativeName>
    <alternativeName>
        <fullName evidence="1">tRNA m2A37 methyltransferase</fullName>
    </alternativeName>
</protein>